<reference key="1">
    <citation type="submission" date="2001-07" db="EMBL/GenBank/DDBJ databases">
        <title>Cloning and characterization of mBD-7 and mBD-8, two novel mouse beta-defensins.</title>
        <authorList>
            <person name="Conejo-Garcia J.-R."/>
            <person name="Nehls M.C."/>
            <person name="Wattler S."/>
            <person name="Bals R."/>
            <person name="Heitland A."/>
            <person name="Kluever E."/>
            <person name="Liepke C."/>
            <person name="Adermann K."/>
            <person name="Forssmann W.-G."/>
        </authorList>
    </citation>
    <scope>NUCLEOTIDE SEQUENCE [GENOMIC DNA / MRNA]</scope>
    <source>
        <tissue>Lung</tissue>
    </source>
</reference>
<reference key="2">
    <citation type="journal article" date="2001" name="Protein Sci.">
        <title>Structure determination of human and murine beta-defensins reveals structural conservation in the absence of significant sequence similarity.</title>
        <authorList>
            <person name="Bauer F."/>
            <person name="Schweimer K."/>
            <person name="Kluever E."/>
            <person name="Conejo-Garcia J.-R."/>
            <person name="Forssmann W.-G."/>
            <person name="Roesch P."/>
            <person name="Adermann K."/>
            <person name="Sticht H."/>
        </authorList>
    </citation>
    <scope>STRUCTURE BY NMR OF 26-62</scope>
</reference>
<dbReference type="EMBL" id="AJ298147">
    <property type="protein sequence ID" value="CAC44541.1"/>
    <property type="molecule type" value="mRNA"/>
</dbReference>
<dbReference type="EMBL" id="AJ298148">
    <property type="protein sequence ID" value="CAC44542.1"/>
    <property type="molecule type" value="Genomic_DNA"/>
</dbReference>
<dbReference type="CCDS" id="CCDS40261.1"/>
<dbReference type="RefSeq" id="NP_631966.1">
    <property type="nucleotide sequence ID" value="NM_139220.1"/>
</dbReference>
<dbReference type="PDB" id="1E4T">
    <property type="method" value="NMR"/>
    <property type="chains" value="A=26-62"/>
</dbReference>
<dbReference type="PDBsum" id="1E4T"/>
<dbReference type="SMR" id="Q91V70"/>
<dbReference type="FunCoup" id="Q91V70">
    <property type="interactions" value="110"/>
</dbReference>
<dbReference type="STRING" id="10090.ENSMUSP00000045523"/>
<dbReference type="PaxDb" id="10090-ENSMUSP00000045523"/>
<dbReference type="DNASU" id="246080"/>
<dbReference type="Ensembl" id="ENSMUST00000047851.4">
    <property type="protein sequence ID" value="ENSMUSP00000045523.4"/>
    <property type="gene ID" value="ENSMUSG00000037790.4"/>
</dbReference>
<dbReference type="GeneID" id="246080"/>
<dbReference type="KEGG" id="mmu:246080"/>
<dbReference type="UCSC" id="uc009lar.1">
    <property type="organism name" value="mouse"/>
</dbReference>
<dbReference type="AGR" id="MGI:2179200"/>
<dbReference type="CTD" id="246080"/>
<dbReference type="MGI" id="MGI:2179200">
    <property type="gene designation" value="Defb7"/>
</dbReference>
<dbReference type="VEuPathDB" id="HostDB:ENSMUSG00000037790"/>
<dbReference type="GeneTree" id="ENSGT01030000235924"/>
<dbReference type="HOGENOM" id="CLU_189296_4_1_1"/>
<dbReference type="InParanoid" id="Q91V70"/>
<dbReference type="OMA" id="RVSSECH"/>
<dbReference type="PhylomeDB" id="Q91V70"/>
<dbReference type="BioGRID-ORCS" id="246080">
    <property type="hits" value="1 hit in 76 CRISPR screens"/>
</dbReference>
<dbReference type="EvolutionaryTrace" id="Q91V70"/>
<dbReference type="PRO" id="PR:Q91V70"/>
<dbReference type="Proteomes" id="UP000000589">
    <property type="component" value="Chromosome 8"/>
</dbReference>
<dbReference type="RNAct" id="Q91V70">
    <property type="molecule type" value="protein"/>
</dbReference>
<dbReference type="Bgee" id="ENSMUSG00000037790">
    <property type="expression patterns" value="Expressed in lumbar dorsal root ganglion and 19 other cell types or tissues"/>
</dbReference>
<dbReference type="GO" id="GO:0005576">
    <property type="term" value="C:extracellular region"/>
    <property type="evidence" value="ECO:0007669"/>
    <property type="project" value="UniProtKB-SubCell"/>
</dbReference>
<dbReference type="GO" id="GO:0042742">
    <property type="term" value="P:defense response to bacterium"/>
    <property type="evidence" value="ECO:0007669"/>
    <property type="project" value="UniProtKB-KW"/>
</dbReference>
<dbReference type="FunFam" id="3.10.360.10:FF:000001">
    <property type="entry name" value="Beta-defensin 1"/>
    <property type="match status" value="1"/>
</dbReference>
<dbReference type="Gene3D" id="3.10.360.10">
    <property type="entry name" value="Antimicrobial Peptide, Beta-defensin 2, Chain A"/>
    <property type="match status" value="1"/>
</dbReference>
<dbReference type="InterPro" id="IPR001855">
    <property type="entry name" value="Defensin_beta-like"/>
</dbReference>
<dbReference type="PANTHER" id="PTHR20515">
    <property type="entry name" value="BETA-DEFENSIN"/>
    <property type="match status" value="1"/>
</dbReference>
<dbReference type="PANTHER" id="PTHR20515:SF2">
    <property type="entry name" value="DEFENSIN BETA 4A"/>
    <property type="match status" value="1"/>
</dbReference>
<dbReference type="Pfam" id="PF00711">
    <property type="entry name" value="Defensin_beta"/>
    <property type="match status" value="1"/>
</dbReference>
<dbReference type="SUPFAM" id="SSF57392">
    <property type="entry name" value="Defensin-like"/>
    <property type="match status" value="1"/>
</dbReference>
<protein>
    <recommendedName>
        <fullName>Beta-defensin 7</fullName>
        <shortName>BD-7</shortName>
        <shortName>mBD-7</shortName>
        <shortName>mBD7</shortName>
    </recommendedName>
    <alternativeName>
        <fullName>Defensin, beta 7</fullName>
    </alternativeName>
</protein>
<accession>Q91V70</accession>
<evidence type="ECO:0000250" key="1"/>
<evidence type="ECO:0000250" key="2">
    <source>
        <dbReference type="UniProtKB" id="P46165"/>
    </source>
</evidence>
<evidence type="ECO:0000255" key="3"/>
<evidence type="ECO:0000305" key="4"/>
<evidence type="ECO:0007829" key="5">
    <source>
        <dbReference type="PDB" id="1E4T"/>
    </source>
</evidence>
<gene>
    <name type="primary">Defb7</name>
</gene>
<keyword id="KW-0002">3D-structure</keyword>
<keyword id="KW-0044">Antibiotic</keyword>
<keyword id="KW-0929">Antimicrobial</keyword>
<keyword id="KW-0211">Defensin</keyword>
<keyword id="KW-1015">Disulfide bond</keyword>
<keyword id="KW-0873">Pyrrolidone carboxylic acid</keyword>
<keyword id="KW-1185">Reference proteome</keyword>
<keyword id="KW-0964">Secreted</keyword>
<keyword id="KW-0732">Signal</keyword>
<name>DEFB7_MOUSE</name>
<proteinExistence type="evidence at protein level"/>
<comment type="function">
    <text evidence="1">Has bactericidal activity.</text>
</comment>
<comment type="subcellular location">
    <subcellularLocation>
        <location evidence="4">Secreted</location>
    </subcellularLocation>
</comment>
<comment type="similarity">
    <text evidence="4">Belongs to the beta-defensin family. LAP/TAP subfamily.</text>
</comment>
<organism>
    <name type="scientific">Mus musculus</name>
    <name type="common">Mouse</name>
    <dbReference type="NCBI Taxonomy" id="10090"/>
    <lineage>
        <taxon>Eukaryota</taxon>
        <taxon>Metazoa</taxon>
        <taxon>Chordata</taxon>
        <taxon>Craniata</taxon>
        <taxon>Vertebrata</taxon>
        <taxon>Euteleostomi</taxon>
        <taxon>Mammalia</taxon>
        <taxon>Eutheria</taxon>
        <taxon>Euarchontoglires</taxon>
        <taxon>Glires</taxon>
        <taxon>Rodentia</taxon>
        <taxon>Myomorpha</taxon>
        <taxon>Muroidea</taxon>
        <taxon>Muridae</taxon>
        <taxon>Murinae</taxon>
        <taxon>Mus</taxon>
        <taxon>Mus</taxon>
    </lineage>
</organism>
<feature type="signal peptide" evidence="3">
    <location>
        <begin position="1"/>
        <end position="22"/>
    </location>
</feature>
<feature type="propeptide" id="PRO_0000006933" evidence="3">
    <location>
        <begin position="23"/>
        <end position="25"/>
    </location>
</feature>
<feature type="peptide" id="PRO_0000006934" description="Beta-defensin 7">
    <location>
        <begin position="26"/>
        <end position="71"/>
    </location>
</feature>
<feature type="modified residue" description="Pyrrolidone carboxylic acid" evidence="2">
    <location>
        <position position="23"/>
    </location>
</feature>
<feature type="disulfide bond">
    <location>
        <begin position="31"/>
        <end position="58"/>
    </location>
</feature>
<feature type="disulfide bond">
    <location>
        <begin position="38"/>
        <end position="52"/>
    </location>
</feature>
<feature type="disulfide bond">
    <location>
        <begin position="42"/>
        <end position="59"/>
    </location>
</feature>
<feature type="helix" evidence="5">
    <location>
        <begin position="31"/>
        <end position="34"/>
    </location>
</feature>
<feature type="strand" evidence="5">
    <location>
        <begin position="37"/>
        <end position="39"/>
    </location>
</feature>
<feature type="strand" evidence="5">
    <location>
        <begin position="46"/>
        <end position="51"/>
    </location>
</feature>
<feature type="strand" evidence="5">
    <location>
        <begin position="53"/>
        <end position="55"/>
    </location>
</feature>
<feature type="strand" evidence="5">
    <location>
        <begin position="57"/>
        <end position="60"/>
    </location>
</feature>
<sequence length="71" mass="8292">MRIHYVLFAFLLVLLSPFAAFSQDINSKRACYREGGECLQRCIGLFHKIGTCNFRFKCCKFQIPEKKTKIL</sequence>